<dbReference type="EC" id="4.2.1.59" evidence="1"/>
<dbReference type="EMBL" id="BA000022">
    <property type="protein sequence ID" value="BAA17907.1"/>
    <property type="status" value="ALT_INIT"/>
    <property type="molecule type" value="Genomic_DNA"/>
</dbReference>
<dbReference type="PIR" id="S75045">
    <property type="entry name" value="S75045"/>
</dbReference>
<dbReference type="SMR" id="P73848"/>
<dbReference type="FunCoup" id="P73848">
    <property type="interactions" value="412"/>
</dbReference>
<dbReference type="STRING" id="1148.gene:10498776"/>
<dbReference type="PaxDb" id="1148-1652990"/>
<dbReference type="EnsemblBacteria" id="BAA17907">
    <property type="protein sequence ID" value="BAA17907"/>
    <property type="gene ID" value="BAA17907"/>
</dbReference>
<dbReference type="KEGG" id="syn:sll1605"/>
<dbReference type="eggNOG" id="COG0764">
    <property type="taxonomic scope" value="Bacteria"/>
</dbReference>
<dbReference type="InParanoid" id="P73848"/>
<dbReference type="PhylomeDB" id="P73848"/>
<dbReference type="Proteomes" id="UP000001425">
    <property type="component" value="Chromosome"/>
</dbReference>
<dbReference type="GO" id="GO:0005737">
    <property type="term" value="C:cytoplasm"/>
    <property type="evidence" value="ECO:0007669"/>
    <property type="project" value="UniProtKB-SubCell"/>
</dbReference>
<dbReference type="GO" id="GO:0016020">
    <property type="term" value="C:membrane"/>
    <property type="evidence" value="ECO:0007669"/>
    <property type="project" value="GOC"/>
</dbReference>
<dbReference type="GO" id="GO:0019171">
    <property type="term" value="F:(3R)-hydroxyacyl-[acyl-carrier-protein] dehydratase activity"/>
    <property type="evidence" value="ECO:0007669"/>
    <property type="project" value="UniProtKB-EC"/>
</dbReference>
<dbReference type="GO" id="GO:0006633">
    <property type="term" value="P:fatty acid biosynthetic process"/>
    <property type="evidence" value="ECO:0007669"/>
    <property type="project" value="UniProtKB-UniRule"/>
</dbReference>
<dbReference type="GO" id="GO:0009245">
    <property type="term" value="P:lipid A biosynthetic process"/>
    <property type="evidence" value="ECO:0007669"/>
    <property type="project" value="UniProtKB-UniRule"/>
</dbReference>
<dbReference type="CDD" id="cd01288">
    <property type="entry name" value="FabZ"/>
    <property type="match status" value="1"/>
</dbReference>
<dbReference type="FunFam" id="3.10.129.10:FF:000001">
    <property type="entry name" value="3-hydroxyacyl-[acyl-carrier-protein] dehydratase FabZ"/>
    <property type="match status" value="1"/>
</dbReference>
<dbReference type="Gene3D" id="3.10.129.10">
    <property type="entry name" value="Hotdog Thioesterase"/>
    <property type="match status" value="1"/>
</dbReference>
<dbReference type="HAMAP" id="MF_00406">
    <property type="entry name" value="FabZ"/>
    <property type="match status" value="1"/>
</dbReference>
<dbReference type="InterPro" id="IPR013114">
    <property type="entry name" value="FabA_FabZ"/>
</dbReference>
<dbReference type="InterPro" id="IPR010084">
    <property type="entry name" value="FabZ"/>
</dbReference>
<dbReference type="InterPro" id="IPR029069">
    <property type="entry name" value="HotDog_dom_sf"/>
</dbReference>
<dbReference type="NCBIfam" id="TIGR01750">
    <property type="entry name" value="fabZ"/>
    <property type="match status" value="1"/>
</dbReference>
<dbReference type="NCBIfam" id="NF000582">
    <property type="entry name" value="PRK00006.1"/>
    <property type="match status" value="1"/>
</dbReference>
<dbReference type="PANTHER" id="PTHR30272">
    <property type="entry name" value="3-HYDROXYACYL-[ACYL-CARRIER-PROTEIN] DEHYDRATASE"/>
    <property type="match status" value="1"/>
</dbReference>
<dbReference type="PANTHER" id="PTHR30272:SF1">
    <property type="entry name" value="3-HYDROXYACYL-[ACYL-CARRIER-PROTEIN] DEHYDRATASE"/>
    <property type="match status" value="1"/>
</dbReference>
<dbReference type="Pfam" id="PF07977">
    <property type="entry name" value="FabA"/>
    <property type="match status" value="1"/>
</dbReference>
<dbReference type="SUPFAM" id="SSF54637">
    <property type="entry name" value="Thioesterase/thiol ester dehydrase-isomerase"/>
    <property type="match status" value="1"/>
</dbReference>
<organism>
    <name type="scientific">Synechocystis sp. (strain ATCC 27184 / PCC 6803 / Kazusa)</name>
    <dbReference type="NCBI Taxonomy" id="1111708"/>
    <lineage>
        <taxon>Bacteria</taxon>
        <taxon>Bacillati</taxon>
        <taxon>Cyanobacteriota</taxon>
        <taxon>Cyanophyceae</taxon>
        <taxon>Synechococcales</taxon>
        <taxon>Merismopediaceae</taxon>
        <taxon>Synechocystis</taxon>
    </lineage>
</organism>
<evidence type="ECO:0000255" key="1">
    <source>
        <dbReference type="HAMAP-Rule" id="MF_00406"/>
    </source>
</evidence>
<evidence type="ECO:0000305" key="2"/>
<gene>
    <name evidence="1" type="primary">fabZ</name>
    <name type="ordered locus">sll1605</name>
</gene>
<protein>
    <recommendedName>
        <fullName evidence="1">3-hydroxyacyl-[acyl-carrier-protein] dehydratase FabZ</fullName>
        <ecNumber evidence="1">4.2.1.59</ecNumber>
    </recommendedName>
    <alternativeName>
        <fullName evidence="1">(3R)-hydroxymyristoyl-[acyl-carrier-protein] dehydratase</fullName>
        <shortName evidence="1">(3R)-hydroxymyristoyl-ACP dehydrase</shortName>
    </alternativeName>
    <alternativeName>
        <fullName evidence="1">Beta-hydroxyacyl-ACP dehydratase</fullName>
    </alternativeName>
</protein>
<sequence length="164" mass="17942">MSTPEVTPTLSDSNGNEAGVQTQFTIQEISDLLPHRYPFALVDRIIDFQPGKCAVGLKNVTINEPFFPGHIPDRPIMPGVLIVESMAQVGGVILTQLPGMRGKFFAFAGIDGVRFRRPVVPGDQLIMTVELQSFKLQRIAKMQGEARVDGQLVCGGEMLFSLID</sequence>
<keyword id="KW-0963">Cytoplasm</keyword>
<keyword id="KW-0441">Lipid A biosynthesis</keyword>
<keyword id="KW-0444">Lipid biosynthesis</keyword>
<keyword id="KW-0443">Lipid metabolism</keyword>
<keyword id="KW-0456">Lyase</keyword>
<keyword id="KW-1185">Reference proteome</keyword>
<accession>P73848</accession>
<name>FABZ_SYNY3</name>
<comment type="function">
    <text evidence="1">Involved in unsaturated fatty acids biosynthesis. Catalyzes the dehydration of short chain beta-hydroxyacyl-ACPs and long chain saturated and unsaturated beta-hydroxyacyl-ACPs.</text>
</comment>
<comment type="catalytic activity">
    <reaction evidence="1">
        <text>a (3R)-hydroxyacyl-[ACP] = a (2E)-enoyl-[ACP] + H2O</text>
        <dbReference type="Rhea" id="RHEA:13097"/>
        <dbReference type="Rhea" id="RHEA-COMP:9925"/>
        <dbReference type="Rhea" id="RHEA-COMP:9945"/>
        <dbReference type="ChEBI" id="CHEBI:15377"/>
        <dbReference type="ChEBI" id="CHEBI:78784"/>
        <dbReference type="ChEBI" id="CHEBI:78827"/>
        <dbReference type="EC" id="4.2.1.59"/>
    </reaction>
</comment>
<comment type="subcellular location">
    <subcellularLocation>
        <location evidence="1">Cytoplasm</location>
    </subcellularLocation>
</comment>
<comment type="similarity">
    <text evidence="1">Belongs to the thioester dehydratase family. FabZ subfamily.</text>
</comment>
<comment type="sequence caution" evidence="2">
    <conflict type="erroneous initiation">
        <sequence resource="EMBL-CDS" id="BAA17907"/>
    </conflict>
</comment>
<feature type="chain" id="PRO_0000091753" description="3-hydroxyacyl-[acyl-carrier-protein] dehydratase FabZ">
    <location>
        <begin position="1"/>
        <end position="164"/>
    </location>
</feature>
<feature type="active site" evidence="1">
    <location>
        <position position="70"/>
    </location>
</feature>
<proteinExistence type="inferred from homology"/>
<reference key="1">
    <citation type="journal article" date="1996" name="DNA Res.">
        <title>Sequence analysis of the genome of the unicellular cyanobacterium Synechocystis sp. strain PCC6803. II. Sequence determination of the entire genome and assignment of potential protein-coding regions.</title>
        <authorList>
            <person name="Kaneko T."/>
            <person name="Sato S."/>
            <person name="Kotani H."/>
            <person name="Tanaka A."/>
            <person name="Asamizu E."/>
            <person name="Nakamura Y."/>
            <person name="Miyajima N."/>
            <person name="Hirosawa M."/>
            <person name="Sugiura M."/>
            <person name="Sasamoto S."/>
            <person name="Kimura T."/>
            <person name="Hosouchi T."/>
            <person name="Matsuno A."/>
            <person name="Muraki A."/>
            <person name="Nakazaki N."/>
            <person name="Naruo K."/>
            <person name="Okumura S."/>
            <person name="Shimpo S."/>
            <person name="Takeuchi C."/>
            <person name="Wada T."/>
            <person name="Watanabe A."/>
            <person name="Yamada M."/>
            <person name="Yasuda M."/>
            <person name="Tabata S."/>
        </authorList>
    </citation>
    <scope>NUCLEOTIDE SEQUENCE [LARGE SCALE GENOMIC DNA]</scope>
    <source>
        <strain>ATCC 27184 / PCC 6803 / Kazusa</strain>
    </source>
</reference>